<accession>Q732Z5</accession>
<proteinExistence type="inferred from homology"/>
<dbReference type="EC" id="5.4.2.11" evidence="1"/>
<dbReference type="EMBL" id="AE017194">
    <property type="protein sequence ID" value="AAS42670.1"/>
    <property type="molecule type" value="Genomic_DNA"/>
</dbReference>
<dbReference type="SMR" id="Q732Z5"/>
<dbReference type="KEGG" id="bca:BCE_3765"/>
<dbReference type="HOGENOM" id="CLU_033323_1_1_9"/>
<dbReference type="UniPathway" id="UPA00109">
    <property type="reaction ID" value="UER00186"/>
</dbReference>
<dbReference type="Proteomes" id="UP000002527">
    <property type="component" value="Chromosome"/>
</dbReference>
<dbReference type="GO" id="GO:0004619">
    <property type="term" value="F:phosphoglycerate mutase activity"/>
    <property type="evidence" value="ECO:0007669"/>
    <property type="project" value="UniProtKB-EC"/>
</dbReference>
<dbReference type="GO" id="GO:0006094">
    <property type="term" value="P:gluconeogenesis"/>
    <property type="evidence" value="ECO:0007669"/>
    <property type="project" value="UniProtKB-UniRule"/>
</dbReference>
<dbReference type="GO" id="GO:0006096">
    <property type="term" value="P:glycolytic process"/>
    <property type="evidence" value="ECO:0007669"/>
    <property type="project" value="UniProtKB-UniRule"/>
</dbReference>
<dbReference type="CDD" id="cd07067">
    <property type="entry name" value="HP_PGM_like"/>
    <property type="match status" value="1"/>
</dbReference>
<dbReference type="FunFam" id="3.40.50.1240:FF:000003">
    <property type="entry name" value="2,3-bisphosphoglycerate-dependent phosphoglycerate mutase"/>
    <property type="match status" value="1"/>
</dbReference>
<dbReference type="Gene3D" id="3.40.50.1240">
    <property type="entry name" value="Phosphoglycerate mutase-like"/>
    <property type="match status" value="1"/>
</dbReference>
<dbReference type="HAMAP" id="MF_01039">
    <property type="entry name" value="PGAM_GpmA"/>
    <property type="match status" value="1"/>
</dbReference>
<dbReference type="InterPro" id="IPR013078">
    <property type="entry name" value="His_Pase_superF_clade-1"/>
</dbReference>
<dbReference type="InterPro" id="IPR029033">
    <property type="entry name" value="His_PPase_superfam"/>
</dbReference>
<dbReference type="InterPro" id="IPR001345">
    <property type="entry name" value="PG/BPGM_mutase_AS"/>
</dbReference>
<dbReference type="InterPro" id="IPR005952">
    <property type="entry name" value="Phosphogly_mut1"/>
</dbReference>
<dbReference type="NCBIfam" id="TIGR01258">
    <property type="entry name" value="pgm_1"/>
    <property type="match status" value="1"/>
</dbReference>
<dbReference type="NCBIfam" id="NF010713">
    <property type="entry name" value="PRK14115.1"/>
    <property type="match status" value="1"/>
</dbReference>
<dbReference type="PANTHER" id="PTHR11931">
    <property type="entry name" value="PHOSPHOGLYCERATE MUTASE"/>
    <property type="match status" value="1"/>
</dbReference>
<dbReference type="Pfam" id="PF00300">
    <property type="entry name" value="His_Phos_1"/>
    <property type="match status" value="1"/>
</dbReference>
<dbReference type="PIRSF" id="PIRSF000709">
    <property type="entry name" value="6PFK_2-Ptase"/>
    <property type="match status" value="1"/>
</dbReference>
<dbReference type="SMART" id="SM00855">
    <property type="entry name" value="PGAM"/>
    <property type="match status" value="1"/>
</dbReference>
<dbReference type="SUPFAM" id="SSF53254">
    <property type="entry name" value="Phosphoglycerate mutase-like"/>
    <property type="match status" value="1"/>
</dbReference>
<dbReference type="PROSITE" id="PS00175">
    <property type="entry name" value="PG_MUTASE"/>
    <property type="match status" value="1"/>
</dbReference>
<name>GPMA2_BACC1</name>
<protein>
    <recommendedName>
        <fullName evidence="1">2,3-bisphosphoglycerate-dependent phosphoglycerate mutase 2</fullName>
        <shortName evidence="1">BPG-dependent PGAM 2</shortName>
        <shortName evidence="1">PGAM 2</shortName>
        <shortName evidence="1">Phosphoglyceromutase 2</shortName>
        <shortName evidence="1">dPGM 2</shortName>
        <ecNumber evidence="1">5.4.2.11</ecNumber>
    </recommendedName>
</protein>
<keyword id="KW-0312">Gluconeogenesis</keyword>
<keyword id="KW-0324">Glycolysis</keyword>
<keyword id="KW-0413">Isomerase</keyword>
<sequence length="240" mass="27968">MVKLVLIRHGQSEWNVENRFTGWTDVDLSSKGLEEAREAGVMLKASGFSFDIAYTSVLRRAMRTLWITLEEMDLMWIPVYKTWKLNERHYGALQGLNKEETARKYGDEQVTLWRRSTNVRPPALTKDDERYEAAHPKYRDIKDYEFPLTEDLEDTEKRVVSYWNEEIAPNVKAGKQVIIAAHGNTIRALVKHLDQISDKDIENVNIPTGTPLVYELDNDLKPIGHYYLNREIETLEEKQV</sequence>
<gene>
    <name evidence="1" type="primary">gpmA2</name>
    <name type="ordered locus">BCE_3765</name>
</gene>
<comment type="function">
    <text evidence="1">Catalyzes the interconversion of 2-phosphoglycerate and 3-phosphoglycerate.</text>
</comment>
<comment type="catalytic activity">
    <reaction evidence="1">
        <text>(2R)-2-phosphoglycerate = (2R)-3-phosphoglycerate</text>
        <dbReference type="Rhea" id="RHEA:15901"/>
        <dbReference type="ChEBI" id="CHEBI:58272"/>
        <dbReference type="ChEBI" id="CHEBI:58289"/>
        <dbReference type="EC" id="5.4.2.11"/>
    </reaction>
</comment>
<comment type="pathway">
    <text evidence="1">Carbohydrate degradation; glycolysis; pyruvate from D-glyceraldehyde 3-phosphate: step 3/5.</text>
</comment>
<comment type="similarity">
    <text evidence="1">Belongs to the phosphoglycerate mutase family. BPG-dependent PGAM subfamily.</text>
</comment>
<organism>
    <name type="scientific">Bacillus cereus (strain ATCC 10987 / NRS 248)</name>
    <dbReference type="NCBI Taxonomy" id="222523"/>
    <lineage>
        <taxon>Bacteria</taxon>
        <taxon>Bacillati</taxon>
        <taxon>Bacillota</taxon>
        <taxon>Bacilli</taxon>
        <taxon>Bacillales</taxon>
        <taxon>Bacillaceae</taxon>
        <taxon>Bacillus</taxon>
        <taxon>Bacillus cereus group</taxon>
    </lineage>
</organism>
<reference key="1">
    <citation type="journal article" date="2004" name="Nucleic Acids Res.">
        <title>The genome sequence of Bacillus cereus ATCC 10987 reveals metabolic adaptations and a large plasmid related to Bacillus anthracis pXO1.</title>
        <authorList>
            <person name="Rasko D.A."/>
            <person name="Ravel J."/>
            <person name="Oekstad O.A."/>
            <person name="Helgason E."/>
            <person name="Cer R.Z."/>
            <person name="Jiang L."/>
            <person name="Shores K.A."/>
            <person name="Fouts D.E."/>
            <person name="Tourasse N.J."/>
            <person name="Angiuoli S.V."/>
            <person name="Kolonay J.F."/>
            <person name="Nelson W.C."/>
            <person name="Kolstoe A.-B."/>
            <person name="Fraser C.M."/>
            <person name="Read T.D."/>
        </authorList>
    </citation>
    <scope>NUCLEOTIDE SEQUENCE [LARGE SCALE GENOMIC DNA]</scope>
    <source>
        <strain>ATCC 10987 / NRS 248</strain>
    </source>
</reference>
<feature type="chain" id="PRO_0000179844" description="2,3-bisphosphoglycerate-dependent phosphoglycerate mutase 2">
    <location>
        <begin position="1"/>
        <end position="240"/>
    </location>
</feature>
<feature type="active site" description="Tele-phosphohistidine intermediate" evidence="1">
    <location>
        <position position="9"/>
    </location>
</feature>
<feature type="active site" description="Proton donor/acceptor" evidence="1">
    <location>
        <position position="87"/>
    </location>
</feature>
<feature type="binding site" evidence="1">
    <location>
        <begin position="8"/>
        <end position="15"/>
    </location>
    <ligand>
        <name>substrate</name>
    </ligand>
</feature>
<feature type="binding site" evidence="1">
    <location>
        <begin position="21"/>
        <end position="22"/>
    </location>
    <ligand>
        <name>substrate</name>
    </ligand>
</feature>
<feature type="binding site" evidence="1">
    <location>
        <position position="60"/>
    </location>
    <ligand>
        <name>substrate</name>
    </ligand>
</feature>
<feature type="binding site" evidence="1">
    <location>
        <begin position="87"/>
        <end position="90"/>
    </location>
    <ligand>
        <name>substrate</name>
    </ligand>
</feature>
<feature type="binding site" evidence="1">
    <location>
        <position position="98"/>
    </location>
    <ligand>
        <name>substrate</name>
    </ligand>
</feature>
<feature type="binding site" evidence="1">
    <location>
        <begin position="114"/>
        <end position="115"/>
    </location>
    <ligand>
        <name>substrate</name>
    </ligand>
</feature>
<feature type="binding site" evidence="1">
    <location>
        <begin position="183"/>
        <end position="184"/>
    </location>
    <ligand>
        <name>substrate</name>
    </ligand>
</feature>
<feature type="site" description="Transition state stabilizer" evidence="1">
    <location>
        <position position="182"/>
    </location>
</feature>
<evidence type="ECO:0000255" key="1">
    <source>
        <dbReference type="HAMAP-Rule" id="MF_01039"/>
    </source>
</evidence>